<organism>
    <name type="scientific">Akkermansia muciniphila (strain ATCC BAA-835 / DSM 22959 / JCM 33894 / BCRC 81048 / CCUG 64013 / CIP 107961 / Muc)</name>
    <dbReference type="NCBI Taxonomy" id="349741"/>
    <lineage>
        <taxon>Bacteria</taxon>
        <taxon>Pseudomonadati</taxon>
        <taxon>Verrucomicrobiota</taxon>
        <taxon>Verrucomicrobiia</taxon>
        <taxon>Verrucomicrobiales</taxon>
        <taxon>Akkermansiaceae</taxon>
        <taxon>Akkermansia</taxon>
    </lineage>
</organism>
<comment type="function">
    <text evidence="1">Binds 23S rRNA and is also seen to make contacts with the A and possibly P site tRNAs.</text>
</comment>
<comment type="subunit">
    <text evidence="1">Part of the 50S ribosomal subunit.</text>
</comment>
<comment type="similarity">
    <text evidence="1">Belongs to the universal ribosomal protein uL16 family.</text>
</comment>
<name>RL16_AKKM8</name>
<dbReference type="EMBL" id="CP001071">
    <property type="protein sequence ID" value="ACD04138.1"/>
    <property type="molecule type" value="Genomic_DNA"/>
</dbReference>
<dbReference type="RefSeq" id="WP_012419353.1">
    <property type="nucleotide sequence ID" value="NZ_CP071807.1"/>
</dbReference>
<dbReference type="SMR" id="B2UMT2"/>
<dbReference type="STRING" id="349741.Amuc_0296"/>
<dbReference type="PaxDb" id="349741-Amuc_0296"/>
<dbReference type="GeneID" id="60879774"/>
<dbReference type="KEGG" id="amu:Amuc_0296"/>
<dbReference type="eggNOG" id="COG0197">
    <property type="taxonomic scope" value="Bacteria"/>
</dbReference>
<dbReference type="HOGENOM" id="CLU_078858_2_1_0"/>
<dbReference type="OrthoDB" id="9802589at2"/>
<dbReference type="BioCyc" id="AMUC349741:G1GBX-338-MONOMER"/>
<dbReference type="Proteomes" id="UP000001031">
    <property type="component" value="Chromosome"/>
</dbReference>
<dbReference type="GO" id="GO:0022625">
    <property type="term" value="C:cytosolic large ribosomal subunit"/>
    <property type="evidence" value="ECO:0007669"/>
    <property type="project" value="TreeGrafter"/>
</dbReference>
<dbReference type="GO" id="GO:0019843">
    <property type="term" value="F:rRNA binding"/>
    <property type="evidence" value="ECO:0007669"/>
    <property type="project" value="UniProtKB-UniRule"/>
</dbReference>
<dbReference type="GO" id="GO:0003735">
    <property type="term" value="F:structural constituent of ribosome"/>
    <property type="evidence" value="ECO:0007669"/>
    <property type="project" value="InterPro"/>
</dbReference>
<dbReference type="GO" id="GO:0000049">
    <property type="term" value="F:tRNA binding"/>
    <property type="evidence" value="ECO:0007669"/>
    <property type="project" value="UniProtKB-KW"/>
</dbReference>
<dbReference type="GO" id="GO:0006412">
    <property type="term" value="P:translation"/>
    <property type="evidence" value="ECO:0007669"/>
    <property type="project" value="UniProtKB-UniRule"/>
</dbReference>
<dbReference type="CDD" id="cd01433">
    <property type="entry name" value="Ribosomal_L16_L10e"/>
    <property type="match status" value="1"/>
</dbReference>
<dbReference type="FunFam" id="3.90.1170.10:FF:000001">
    <property type="entry name" value="50S ribosomal protein L16"/>
    <property type="match status" value="1"/>
</dbReference>
<dbReference type="Gene3D" id="3.90.1170.10">
    <property type="entry name" value="Ribosomal protein L10e/L16"/>
    <property type="match status" value="1"/>
</dbReference>
<dbReference type="HAMAP" id="MF_01342">
    <property type="entry name" value="Ribosomal_uL16"/>
    <property type="match status" value="1"/>
</dbReference>
<dbReference type="InterPro" id="IPR047873">
    <property type="entry name" value="Ribosomal_uL16"/>
</dbReference>
<dbReference type="InterPro" id="IPR000114">
    <property type="entry name" value="Ribosomal_uL16_bact-type"/>
</dbReference>
<dbReference type="InterPro" id="IPR020798">
    <property type="entry name" value="Ribosomal_uL16_CS"/>
</dbReference>
<dbReference type="InterPro" id="IPR016180">
    <property type="entry name" value="Ribosomal_uL16_dom"/>
</dbReference>
<dbReference type="InterPro" id="IPR036920">
    <property type="entry name" value="Ribosomal_uL16_sf"/>
</dbReference>
<dbReference type="NCBIfam" id="TIGR01164">
    <property type="entry name" value="rplP_bact"/>
    <property type="match status" value="1"/>
</dbReference>
<dbReference type="PANTHER" id="PTHR12220">
    <property type="entry name" value="50S/60S RIBOSOMAL PROTEIN L16"/>
    <property type="match status" value="1"/>
</dbReference>
<dbReference type="PANTHER" id="PTHR12220:SF13">
    <property type="entry name" value="LARGE RIBOSOMAL SUBUNIT PROTEIN UL16M"/>
    <property type="match status" value="1"/>
</dbReference>
<dbReference type="Pfam" id="PF00252">
    <property type="entry name" value="Ribosomal_L16"/>
    <property type="match status" value="1"/>
</dbReference>
<dbReference type="PRINTS" id="PR00060">
    <property type="entry name" value="RIBOSOMALL16"/>
</dbReference>
<dbReference type="SUPFAM" id="SSF54686">
    <property type="entry name" value="Ribosomal protein L16p/L10e"/>
    <property type="match status" value="1"/>
</dbReference>
<dbReference type="PROSITE" id="PS00701">
    <property type="entry name" value="RIBOSOMAL_L16_2"/>
    <property type="match status" value="1"/>
</dbReference>
<sequence length="140" mass="15700">MPLMPKRVKHRKMHRGSRSGNATSGTYVAFGDFGLQVLDRGWITNNQIEACRIAINRYLKRKGKVFIRIFPQKSFTSRPPDTRMGKGKGAVEGWVAVVRPGNILFEVGGVTESQAREALRLASNKLGVSTRFVYRQGVQH</sequence>
<evidence type="ECO:0000255" key="1">
    <source>
        <dbReference type="HAMAP-Rule" id="MF_01342"/>
    </source>
</evidence>
<evidence type="ECO:0000256" key="2">
    <source>
        <dbReference type="SAM" id="MobiDB-lite"/>
    </source>
</evidence>
<evidence type="ECO:0000305" key="3"/>
<accession>B2UMT2</accession>
<keyword id="KW-1185">Reference proteome</keyword>
<keyword id="KW-0687">Ribonucleoprotein</keyword>
<keyword id="KW-0689">Ribosomal protein</keyword>
<keyword id="KW-0694">RNA-binding</keyword>
<keyword id="KW-0699">rRNA-binding</keyword>
<keyword id="KW-0820">tRNA-binding</keyword>
<reference key="1">
    <citation type="journal article" date="2011" name="PLoS ONE">
        <title>The genome of Akkermansia muciniphila, a dedicated intestinal mucin degrader, and its use in exploring intestinal metagenomes.</title>
        <authorList>
            <person name="van Passel M.W."/>
            <person name="Kant R."/>
            <person name="Zoetendal E.G."/>
            <person name="Plugge C.M."/>
            <person name="Derrien M."/>
            <person name="Malfatti S.A."/>
            <person name="Chain P.S."/>
            <person name="Woyke T."/>
            <person name="Palva A."/>
            <person name="de Vos W.M."/>
            <person name="Smidt H."/>
        </authorList>
    </citation>
    <scope>NUCLEOTIDE SEQUENCE [LARGE SCALE GENOMIC DNA]</scope>
    <source>
        <strain>ATCC BAA-835 / DSM 22959 / JCM 33894 / BCRC 81048 / CCUG 64013 / CIP 107961 / Muc</strain>
    </source>
</reference>
<gene>
    <name evidence="1" type="primary">rplP</name>
    <name type="ordered locus">Amuc_0296</name>
</gene>
<feature type="chain" id="PRO_0000354597" description="Large ribosomal subunit protein uL16">
    <location>
        <begin position="1"/>
        <end position="140"/>
    </location>
</feature>
<feature type="region of interest" description="Disordered" evidence="2">
    <location>
        <begin position="1"/>
        <end position="21"/>
    </location>
</feature>
<feature type="compositionally biased region" description="Basic residues" evidence="2">
    <location>
        <begin position="1"/>
        <end position="17"/>
    </location>
</feature>
<proteinExistence type="inferred from homology"/>
<protein>
    <recommendedName>
        <fullName evidence="1">Large ribosomal subunit protein uL16</fullName>
    </recommendedName>
    <alternativeName>
        <fullName evidence="3">50S ribosomal protein L16</fullName>
    </alternativeName>
</protein>